<dbReference type="EMBL" id="CP000140">
    <property type="protein sequence ID" value="ABR44763.1"/>
    <property type="molecule type" value="Genomic_DNA"/>
</dbReference>
<dbReference type="RefSeq" id="WP_011967122.1">
    <property type="nucleotide sequence ID" value="NC_009615.1"/>
</dbReference>
<dbReference type="STRING" id="435591.BDI_3056"/>
<dbReference type="PaxDb" id="435591-BDI_3056"/>
<dbReference type="KEGG" id="pdi:BDI_3056"/>
<dbReference type="PATRIC" id="fig|435591.13.peg.3015"/>
<dbReference type="eggNOG" id="COG0759">
    <property type="taxonomic scope" value="Bacteria"/>
</dbReference>
<dbReference type="HOGENOM" id="CLU_144811_6_1_10"/>
<dbReference type="BioCyc" id="PDIS435591:G1G5A-3132-MONOMER"/>
<dbReference type="Proteomes" id="UP000000566">
    <property type="component" value="Chromosome"/>
</dbReference>
<dbReference type="GO" id="GO:0005886">
    <property type="term" value="C:plasma membrane"/>
    <property type="evidence" value="ECO:0007669"/>
    <property type="project" value="UniProtKB-SubCell"/>
</dbReference>
<dbReference type="HAMAP" id="MF_00386">
    <property type="entry name" value="UPF0161_YidD"/>
    <property type="match status" value="1"/>
</dbReference>
<dbReference type="InterPro" id="IPR002696">
    <property type="entry name" value="Membr_insert_effic_factor_YidD"/>
</dbReference>
<dbReference type="NCBIfam" id="TIGR00278">
    <property type="entry name" value="membrane protein insertion efficiency factor YidD"/>
    <property type="match status" value="1"/>
</dbReference>
<dbReference type="PANTHER" id="PTHR33383">
    <property type="entry name" value="MEMBRANE PROTEIN INSERTION EFFICIENCY FACTOR-RELATED"/>
    <property type="match status" value="1"/>
</dbReference>
<dbReference type="PANTHER" id="PTHR33383:SF1">
    <property type="entry name" value="MEMBRANE PROTEIN INSERTION EFFICIENCY FACTOR-RELATED"/>
    <property type="match status" value="1"/>
</dbReference>
<dbReference type="Pfam" id="PF01809">
    <property type="entry name" value="YidD"/>
    <property type="match status" value="1"/>
</dbReference>
<dbReference type="SMART" id="SM01234">
    <property type="entry name" value="Haemolytic"/>
    <property type="match status" value="1"/>
</dbReference>
<accession>A6LGE9</accession>
<sequence>MRRFFTTLLLLPVYFYKYCISLMTPASCRYTPTCSEYAVQALKKYGPVKGLYLAVKRILRCHPWGGSGYDPVP</sequence>
<reference key="1">
    <citation type="journal article" date="2007" name="PLoS Biol.">
        <title>Evolution of symbiotic bacteria in the distal human intestine.</title>
        <authorList>
            <person name="Xu J."/>
            <person name="Mahowald M.A."/>
            <person name="Ley R.E."/>
            <person name="Lozupone C.A."/>
            <person name="Hamady M."/>
            <person name="Martens E.C."/>
            <person name="Henrissat B."/>
            <person name="Coutinho P.M."/>
            <person name="Minx P."/>
            <person name="Latreille P."/>
            <person name="Cordum H."/>
            <person name="Van Brunt A."/>
            <person name="Kim K."/>
            <person name="Fulton R.S."/>
            <person name="Fulton L.A."/>
            <person name="Clifton S.W."/>
            <person name="Wilson R.K."/>
            <person name="Knight R.D."/>
            <person name="Gordon J.I."/>
        </authorList>
    </citation>
    <scope>NUCLEOTIDE SEQUENCE [LARGE SCALE GENOMIC DNA]</scope>
    <source>
        <strain>ATCC 8503 / DSM 20701 / CIP 104284 / JCM 5825 / NCTC 11152</strain>
    </source>
</reference>
<gene>
    <name type="ordered locus">BDI_3056</name>
</gene>
<keyword id="KW-0997">Cell inner membrane</keyword>
<keyword id="KW-1003">Cell membrane</keyword>
<keyword id="KW-0472">Membrane</keyword>
<keyword id="KW-1185">Reference proteome</keyword>
<feature type="chain" id="PRO_1000205788" description="Putative membrane protein insertion efficiency factor">
    <location>
        <begin position="1"/>
        <end position="73"/>
    </location>
</feature>
<comment type="function">
    <text evidence="1">Could be involved in insertion of integral membrane proteins into the membrane.</text>
</comment>
<comment type="subcellular location">
    <subcellularLocation>
        <location evidence="1">Cell inner membrane</location>
        <topology evidence="1">Peripheral membrane protein</topology>
        <orientation evidence="1">Cytoplasmic side</orientation>
    </subcellularLocation>
</comment>
<comment type="similarity">
    <text evidence="1">Belongs to the UPF0161 family.</text>
</comment>
<name>YIDD_PARD8</name>
<evidence type="ECO:0000255" key="1">
    <source>
        <dbReference type="HAMAP-Rule" id="MF_00386"/>
    </source>
</evidence>
<organism>
    <name type="scientific">Parabacteroides distasonis (strain ATCC 8503 / DSM 20701 / CIP 104284 / JCM 5825 / NCTC 11152)</name>
    <dbReference type="NCBI Taxonomy" id="435591"/>
    <lineage>
        <taxon>Bacteria</taxon>
        <taxon>Pseudomonadati</taxon>
        <taxon>Bacteroidota</taxon>
        <taxon>Bacteroidia</taxon>
        <taxon>Bacteroidales</taxon>
        <taxon>Tannerellaceae</taxon>
        <taxon>Parabacteroides</taxon>
    </lineage>
</organism>
<protein>
    <recommendedName>
        <fullName evidence="1">Putative membrane protein insertion efficiency factor</fullName>
    </recommendedName>
</protein>
<proteinExistence type="inferred from homology"/>